<reference key="1">
    <citation type="journal article" date="2005" name="Science">
        <title>Life at depth: Photobacterium profundum genome sequence and expression analysis.</title>
        <authorList>
            <person name="Vezzi A."/>
            <person name="Campanaro S."/>
            <person name="D'Angelo M."/>
            <person name="Simonato F."/>
            <person name="Vitulo N."/>
            <person name="Lauro F.M."/>
            <person name="Cestaro A."/>
            <person name="Malacrida G."/>
            <person name="Simionati B."/>
            <person name="Cannata N."/>
            <person name="Romualdi C."/>
            <person name="Bartlett D.H."/>
            <person name="Valle G."/>
        </authorList>
    </citation>
    <scope>NUCLEOTIDE SEQUENCE [LARGE SCALE GENOMIC DNA]</scope>
    <source>
        <strain>ATCC BAA-1253 / SS9</strain>
    </source>
</reference>
<organism>
    <name type="scientific">Photobacterium profundum (strain SS9)</name>
    <dbReference type="NCBI Taxonomy" id="298386"/>
    <lineage>
        <taxon>Bacteria</taxon>
        <taxon>Pseudomonadati</taxon>
        <taxon>Pseudomonadota</taxon>
        <taxon>Gammaproteobacteria</taxon>
        <taxon>Vibrionales</taxon>
        <taxon>Vibrionaceae</taxon>
        <taxon>Photobacterium</taxon>
    </lineage>
</organism>
<sequence>MSEMTPREIVHELDRHIIGQDKAKRAVAIALRNRWRRMQLPEELRVEVTPKNILMIGPTGVGKTEIARRLAKLANAPFIKVEATKFTEVGYVGKEVETIIRDLTDVAVKMTHQQAMSKVQFRAEELAEDRILDILLPPARDQWGQNEENDTDSSTRQSFRKKLREGKLDDKEIEMDIAAPQMGVEIMAPPGMEDMTNQLQGMFQNLAGNTSKKRKMKIKDAIKAATEEEAAKLVNQEELKEQAIFSVENNGIVFLDEIDKICKRGDSSGPDVSREGVQRDLLPLVEGSTVSTKHGMVKTDHILFVASGAFQMSKPSDLIPELQGRLPIRVELEALTSHDFKRILTEPKASLTEQYKALMATESVNIDFSEDGINKIADAAWQVNERTENIGARRLHTVMERLMEELSFDATDRSDELLIIDEAYVNERLDELVENEDLSRFIL</sequence>
<gene>
    <name evidence="1" type="primary">hslU</name>
    <name type="ordered locus">PBPRA0253</name>
</gene>
<evidence type="ECO:0000255" key="1">
    <source>
        <dbReference type="HAMAP-Rule" id="MF_00249"/>
    </source>
</evidence>
<evidence type="ECO:0000256" key="2">
    <source>
        <dbReference type="SAM" id="MobiDB-lite"/>
    </source>
</evidence>
<accession>Q6LVI3</accession>
<feature type="chain" id="PRO_0000160530" description="ATP-dependent protease ATPase subunit HslU">
    <location>
        <begin position="1"/>
        <end position="443"/>
    </location>
</feature>
<feature type="region of interest" description="Disordered" evidence="2">
    <location>
        <begin position="141"/>
        <end position="165"/>
    </location>
</feature>
<feature type="binding site" evidence="1">
    <location>
        <position position="18"/>
    </location>
    <ligand>
        <name>ATP</name>
        <dbReference type="ChEBI" id="CHEBI:30616"/>
    </ligand>
</feature>
<feature type="binding site" evidence="1">
    <location>
        <begin position="60"/>
        <end position="65"/>
    </location>
    <ligand>
        <name>ATP</name>
        <dbReference type="ChEBI" id="CHEBI:30616"/>
    </ligand>
</feature>
<feature type="binding site" evidence="1">
    <location>
        <position position="256"/>
    </location>
    <ligand>
        <name>ATP</name>
        <dbReference type="ChEBI" id="CHEBI:30616"/>
    </ligand>
</feature>
<feature type="binding site" evidence="1">
    <location>
        <position position="321"/>
    </location>
    <ligand>
        <name>ATP</name>
        <dbReference type="ChEBI" id="CHEBI:30616"/>
    </ligand>
</feature>
<feature type="binding site" evidence="1">
    <location>
        <position position="393"/>
    </location>
    <ligand>
        <name>ATP</name>
        <dbReference type="ChEBI" id="CHEBI:30616"/>
    </ligand>
</feature>
<comment type="function">
    <text evidence="1">ATPase subunit of a proteasome-like degradation complex; this subunit has chaperone activity. The binding of ATP and its subsequent hydrolysis by HslU are essential for unfolding of protein substrates subsequently hydrolyzed by HslV. HslU recognizes the N-terminal part of its protein substrates and unfolds these before they are guided to HslV for hydrolysis.</text>
</comment>
<comment type="subunit">
    <text evidence="1">A double ring-shaped homohexamer of HslV is capped on each side by a ring-shaped HslU homohexamer. The assembly of the HslU/HslV complex is dependent on binding of ATP.</text>
</comment>
<comment type="subcellular location">
    <subcellularLocation>
        <location evidence="1">Cytoplasm</location>
    </subcellularLocation>
</comment>
<comment type="similarity">
    <text evidence="1">Belongs to the ClpX chaperone family. HslU subfamily.</text>
</comment>
<keyword id="KW-0067">ATP-binding</keyword>
<keyword id="KW-0143">Chaperone</keyword>
<keyword id="KW-0963">Cytoplasm</keyword>
<keyword id="KW-0547">Nucleotide-binding</keyword>
<keyword id="KW-1185">Reference proteome</keyword>
<name>HSLU_PHOPR</name>
<dbReference type="EMBL" id="CR378663">
    <property type="protein sequence ID" value="CAG18692.1"/>
    <property type="molecule type" value="Genomic_DNA"/>
</dbReference>
<dbReference type="RefSeq" id="WP_011217068.1">
    <property type="nucleotide sequence ID" value="NC_006370.1"/>
</dbReference>
<dbReference type="SMR" id="Q6LVI3"/>
<dbReference type="STRING" id="298386.PBPRA0253"/>
<dbReference type="KEGG" id="ppr:PBPRA0253"/>
<dbReference type="eggNOG" id="COG1220">
    <property type="taxonomic scope" value="Bacteria"/>
</dbReference>
<dbReference type="HOGENOM" id="CLU_033123_0_0_6"/>
<dbReference type="Proteomes" id="UP000000593">
    <property type="component" value="Chromosome 1"/>
</dbReference>
<dbReference type="GO" id="GO:0009376">
    <property type="term" value="C:HslUV protease complex"/>
    <property type="evidence" value="ECO:0007669"/>
    <property type="project" value="UniProtKB-UniRule"/>
</dbReference>
<dbReference type="GO" id="GO:0005524">
    <property type="term" value="F:ATP binding"/>
    <property type="evidence" value="ECO:0007669"/>
    <property type="project" value="UniProtKB-UniRule"/>
</dbReference>
<dbReference type="GO" id="GO:0016887">
    <property type="term" value="F:ATP hydrolysis activity"/>
    <property type="evidence" value="ECO:0007669"/>
    <property type="project" value="InterPro"/>
</dbReference>
<dbReference type="GO" id="GO:0008233">
    <property type="term" value="F:peptidase activity"/>
    <property type="evidence" value="ECO:0007669"/>
    <property type="project" value="InterPro"/>
</dbReference>
<dbReference type="GO" id="GO:0036402">
    <property type="term" value="F:proteasome-activating activity"/>
    <property type="evidence" value="ECO:0007669"/>
    <property type="project" value="UniProtKB-UniRule"/>
</dbReference>
<dbReference type="GO" id="GO:0043335">
    <property type="term" value="P:protein unfolding"/>
    <property type="evidence" value="ECO:0007669"/>
    <property type="project" value="UniProtKB-UniRule"/>
</dbReference>
<dbReference type="GO" id="GO:0051603">
    <property type="term" value="P:proteolysis involved in protein catabolic process"/>
    <property type="evidence" value="ECO:0007669"/>
    <property type="project" value="TreeGrafter"/>
</dbReference>
<dbReference type="CDD" id="cd19498">
    <property type="entry name" value="RecA-like_HslU"/>
    <property type="match status" value="1"/>
</dbReference>
<dbReference type="FunFam" id="1.10.8.10:FF:000028">
    <property type="entry name" value="ATP-dependent protease ATPase subunit HslU"/>
    <property type="match status" value="1"/>
</dbReference>
<dbReference type="FunFam" id="1.10.8.60:FF:000027">
    <property type="entry name" value="ATP-dependent protease ATPase subunit HslU"/>
    <property type="match status" value="1"/>
</dbReference>
<dbReference type="FunFam" id="3.40.50.300:FF:000213">
    <property type="entry name" value="ATP-dependent protease ATPase subunit HslU"/>
    <property type="match status" value="1"/>
</dbReference>
<dbReference type="FunFam" id="3.40.50.300:FF:000220">
    <property type="entry name" value="ATP-dependent protease ATPase subunit HslU"/>
    <property type="match status" value="1"/>
</dbReference>
<dbReference type="Gene3D" id="1.10.8.60">
    <property type="match status" value="1"/>
</dbReference>
<dbReference type="Gene3D" id="1.10.8.10">
    <property type="entry name" value="DNA helicase RuvA subunit, C-terminal domain"/>
    <property type="match status" value="1"/>
</dbReference>
<dbReference type="Gene3D" id="3.40.50.300">
    <property type="entry name" value="P-loop containing nucleotide triphosphate hydrolases"/>
    <property type="match status" value="2"/>
</dbReference>
<dbReference type="HAMAP" id="MF_00249">
    <property type="entry name" value="HslU"/>
    <property type="match status" value="1"/>
</dbReference>
<dbReference type="InterPro" id="IPR003593">
    <property type="entry name" value="AAA+_ATPase"/>
</dbReference>
<dbReference type="InterPro" id="IPR050052">
    <property type="entry name" value="ATP-dep_Clp_protease_ClpX"/>
</dbReference>
<dbReference type="InterPro" id="IPR003959">
    <property type="entry name" value="ATPase_AAA_core"/>
</dbReference>
<dbReference type="InterPro" id="IPR019489">
    <property type="entry name" value="Clp_ATPase_C"/>
</dbReference>
<dbReference type="InterPro" id="IPR004491">
    <property type="entry name" value="HslU"/>
</dbReference>
<dbReference type="InterPro" id="IPR027417">
    <property type="entry name" value="P-loop_NTPase"/>
</dbReference>
<dbReference type="NCBIfam" id="TIGR00390">
    <property type="entry name" value="hslU"/>
    <property type="match status" value="1"/>
</dbReference>
<dbReference type="NCBIfam" id="NF003544">
    <property type="entry name" value="PRK05201.1"/>
    <property type="match status" value="1"/>
</dbReference>
<dbReference type="PANTHER" id="PTHR48102">
    <property type="entry name" value="ATP-DEPENDENT CLP PROTEASE ATP-BINDING SUBUNIT CLPX-LIKE, MITOCHONDRIAL-RELATED"/>
    <property type="match status" value="1"/>
</dbReference>
<dbReference type="PANTHER" id="PTHR48102:SF3">
    <property type="entry name" value="ATP-DEPENDENT PROTEASE ATPASE SUBUNIT HSLU"/>
    <property type="match status" value="1"/>
</dbReference>
<dbReference type="Pfam" id="PF00004">
    <property type="entry name" value="AAA"/>
    <property type="match status" value="1"/>
</dbReference>
<dbReference type="Pfam" id="PF07724">
    <property type="entry name" value="AAA_2"/>
    <property type="match status" value="1"/>
</dbReference>
<dbReference type="SMART" id="SM00382">
    <property type="entry name" value="AAA"/>
    <property type="match status" value="1"/>
</dbReference>
<dbReference type="SMART" id="SM01086">
    <property type="entry name" value="ClpB_D2-small"/>
    <property type="match status" value="1"/>
</dbReference>
<dbReference type="SUPFAM" id="SSF52540">
    <property type="entry name" value="P-loop containing nucleoside triphosphate hydrolases"/>
    <property type="match status" value="1"/>
</dbReference>
<proteinExistence type="inferred from homology"/>
<protein>
    <recommendedName>
        <fullName evidence="1">ATP-dependent protease ATPase subunit HslU</fullName>
    </recommendedName>
    <alternativeName>
        <fullName evidence="1">Unfoldase HslU</fullName>
    </alternativeName>
</protein>